<proteinExistence type="inferred from homology"/>
<organism>
    <name type="scientific">Parasynechococcus marenigrum (strain WH8102)</name>
    <dbReference type="NCBI Taxonomy" id="84588"/>
    <lineage>
        <taxon>Bacteria</taxon>
        <taxon>Bacillati</taxon>
        <taxon>Cyanobacteriota</taxon>
        <taxon>Cyanophyceae</taxon>
        <taxon>Synechococcales</taxon>
        <taxon>Prochlorococcaceae</taxon>
        <taxon>Parasynechococcus</taxon>
        <taxon>Parasynechococcus marenigrum</taxon>
    </lineage>
</organism>
<evidence type="ECO:0000255" key="1">
    <source>
        <dbReference type="HAMAP-Rule" id="MF_01349"/>
    </source>
</evidence>
<keyword id="KW-0067">ATP-binding</keyword>
<keyword id="KW-0963">Cytoplasm</keyword>
<keyword id="KW-0418">Kinase</keyword>
<keyword id="KW-0436">Ligase</keyword>
<keyword id="KW-0511">Multifunctional enzyme</keyword>
<keyword id="KW-0547">Nucleotide-binding</keyword>
<keyword id="KW-0566">Pantothenate biosynthesis</keyword>
<keyword id="KW-0808">Transferase</keyword>
<gene>
    <name evidence="1" type="primary">panC/cmk</name>
    <name type="ordered locus">SYNW2027</name>
</gene>
<name>PANCY_PARMW</name>
<protein>
    <recommendedName>
        <fullName evidence="1">Bifunctional pantoate ligase/cytidylate kinase</fullName>
    </recommendedName>
    <domain>
        <recommendedName>
            <fullName evidence="1">Pantothenate synthetase</fullName>
            <shortName evidence="1">PS</shortName>
            <ecNumber evidence="1">6.3.2.1</ecNumber>
        </recommendedName>
        <alternativeName>
            <fullName evidence="1">Pantoate--beta-alanine ligase</fullName>
        </alternativeName>
        <alternativeName>
            <fullName evidence="1">Pantoate-activating enzyme</fullName>
        </alternativeName>
    </domain>
    <domain>
        <recommendedName>
            <fullName evidence="1">Cytidylate kinase</fullName>
            <shortName evidence="1">CK</shortName>
            <ecNumber evidence="1">2.7.4.25</ecNumber>
        </recommendedName>
        <alternativeName>
            <fullName evidence="1">Cytidine monophosphate kinase</fullName>
            <shortName evidence="1">CMP kinase</shortName>
        </alternativeName>
    </domain>
</protein>
<comment type="function">
    <text evidence="1">Catalyzes the condensation of pantoate with beta-alanine in an ATP-dependent reaction via a pantoyl-adenylate intermediate.</text>
</comment>
<comment type="function">
    <text evidence="1">Catalyzes the transfer of a phosphate group from ATP to either CMP or dCMP to form CDP or dCDP and ADP, respectively.</text>
</comment>
<comment type="catalytic activity">
    <reaction evidence="1">
        <text>(R)-pantoate + beta-alanine + ATP = (R)-pantothenate + AMP + diphosphate + H(+)</text>
        <dbReference type="Rhea" id="RHEA:10912"/>
        <dbReference type="ChEBI" id="CHEBI:15378"/>
        <dbReference type="ChEBI" id="CHEBI:15980"/>
        <dbReference type="ChEBI" id="CHEBI:29032"/>
        <dbReference type="ChEBI" id="CHEBI:30616"/>
        <dbReference type="ChEBI" id="CHEBI:33019"/>
        <dbReference type="ChEBI" id="CHEBI:57966"/>
        <dbReference type="ChEBI" id="CHEBI:456215"/>
        <dbReference type="EC" id="6.3.2.1"/>
    </reaction>
</comment>
<comment type="catalytic activity">
    <reaction evidence="1">
        <text>CMP + ATP = CDP + ADP</text>
        <dbReference type="Rhea" id="RHEA:11600"/>
        <dbReference type="ChEBI" id="CHEBI:30616"/>
        <dbReference type="ChEBI" id="CHEBI:58069"/>
        <dbReference type="ChEBI" id="CHEBI:60377"/>
        <dbReference type="ChEBI" id="CHEBI:456216"/>
        <dbReference type="EC" id="2.7.4.25"/>
    </reaction>
</comment>
<comment type="catalytic activity">
    <reaction evidence="1">
        <text>dCMP + ATP = dCDP + ADP</text>
        <dbReference type="Rhea" id="RHEA:25094"/>
        <dbReference type="ChEBI" id="CHEBI:30616"/>
        <dbReference type="ChEBI" id="CHEBI:57566"/>
        <dbReference type="ChEBI" id="CHEBI:58593"/>
        <dbReference type="ChEBI" id="CHEBI:456216"/>
        <dbReference type="EC" id="2.7.4.25"/>
    </reaction>
</comment>
<comment type="pathway">
    <text evidence="1">Cofactor biosynthesis; (R)-pantothenate biosynthesis; (R)-pantothenate from (R)-pantoate and beta-alanine: step 1/1.</text>
</comment>
<comment type="subcellular location">
    <subcellularLocation>
        <location evidence="1">Cytoplasm</location>
    </subcellularLocation>
</comment>
<comment type="similarity">
    <text evidence="1">In the N-terminal section; belongs to the pantothenate synthetase family.</text>
</comment>
<comment type="similarity">
    <text evidence="1">In the C-terminal section; belongs to the cytidylate kinase family. Type 1 subfamily.</text>
</comment>
<feature type="chain" id="PRO_0000239799" description="Bifunctional pantoate ligase/cytidylate kinase">
    <location>
        <begin position="1"/>
        <end position="501"/>
    </location>
</feature>
<feature type="region of interest" description="Pantoate--beta-alanine ligase" evidence="1">
    <location>
        <begin position="1"/>
        <end position="264"/>
    </location>
</feature>
<feature type="region of interest" description="Cytidylate kinase" evidence="1">
    <location>
        <begin position="265"/>
        <end position="501"/>
    </location>
</feature>
<feature type="active site" description="Proton donor" evidence="1">
    <location>
        <position position="32"/>
    </location>
</feature>
<feature type="binding site" evidence="1">
    <location>
        <begin position="25"/>
        <end position="32"/>
    </location>
    <ligand>
        <name>ATP</name>
        <dbReference type="ChEBI" id="CHEBI:30616"/>
    </ligand>
</feature>
<feature type="binding site" evidence="1">
    <location>
        <position position="55"/>
    </location>
    <ligand>
        <name>(R)-pantoate</name>
        <dbReference type="ChEBI" id="CHEBI:15980"/>
    </ligand>
</feature>
<feature type="binding site" evidence="1">
    <location>
        <position position="55"/>
    </location>
    <ligand>
        <name>beta-alanine</name>
        <dbReference type="ChEBI" id="CHEBI:57966"/>
    </ligand>
</feature>
<feature type="binding site" evidence="1">
    <location>
        <begin position="144"/>
        <end position="147"/>
    </location>
    <ligand>
        <name>ATP</name>
        <dbReference type="ChEBI" id="CHEBI:30616"/>
    </ligand>
</feature>
<feature type="binding site" evidence="1">
    <location>
        <position position="150"/>
    </location>
    <ligand>
        <name>(R)-pantoate</name>
        <dbReference type="ChEBI" id="CHEBI:15980"/>
    </ligand>
</feature>
<feature type="binding site" evidence="1">
    <location>
        <position position="173"/>
    </location>
    <ligand>
        <name>ATP</name>
        <dbReference type="ChEBI" id="CHEBI:30616"/>
    </ligand>
</feature>
<feature type="binding site" evidence="1">
    <location>
        <begin position="181"/>
        <end position="184"/>
    </location>
    <ligand>
        <name>ATP</name>
        <dbReference type="ChEBI" id="CHEBI:30616"/>
    </ligand>
</feature>
<sequence>MLSTQAELAAFHSGLGQPLQFVPTMGGLHQGHGELIRRAAEQGPVLVSVFVNPLQFAPGEDFERYPRSLEADLALADRYGAAALWTPTVQTIYPDGATADSARQAPAALQQHLCGADRPGHFDGVVTVVARLLELTRPAGLWLGEKDWQQLVILRQLVADLVLPVKIHGVATVREADGLALSSRNQYLSAAQRLQAAALPAALRAADGTTPLDVTRSRLSAAGLEVEYVERVDPQSLQPCGSETALSLLAAAVRCGTTRLIDHSFLMTRQPLVAIDGPAGAGKSTVTRAFAERLGLIYLDTGAMYRAVTWLVQQQGVEPGDAAAVDALLRALDLQLQSLPGGGQQVMVNGEDVSQAIRSPEVTGSVSVVAAHRCVRQALTTQQKAMGAKGGLVAEGRDIGSAVFPDADLKVFLTATVAERARRRALDLEQRGFPVQERSELEAQIAERDHLDSTREEAPLVQAIDAVELVTDGMSIDAVIDALVEQFRARVPEEAWPTPAG</sequence>
<dbReference type="EC" id="6.3.2.1" evidence="1"/>
<dbReference type="EC" id="2.7.4.25" evidence="1"/>
<dbReference type="EMBL" id="BX569694">
    <property type="protein sequence ID" value="CAE08542.1"/>
    <property type="molecule type" value="Genomic_DNA"/>
</dbReference>
<dbReference type="RefSeq" id="WP_011128885.1">
    <property type="nucleotide sequence ID" value="NC_005070.1"/>
</dbReference>
<dbReference type="SMR" id="Q7U4P0"/>
<dbReference type="STRING" id="84588.SYNW2027"/>
<dbReference type="KEGG" id="syw:SYNW2027"/>
<dbReference type="eggNOG" id="COG0283">
    <property type="taxonomic scope" value="Bacteria"/>
</dbReference>
<dbReference type="eggNOG" id="COG0414">
    <property type="taxonomic scope" value="Bacteria"/>
</dbReference>
<dbReference type="HOGENOM" id="CLU_037427_0_0_3"/>
<dbReference type="UniPathway" id="UPA00028">
    <property type="reaction ID" value="UER00005"/>
</dbReference>
<dbReference type="Proteomes" id="UP000001422">
    <property type="component" value="Chromosome"/>
</dbReference>
<dbReference type="GO" id="GO:0005829">
    <property type="term" value="C:cytosol"/>
    <property type="evidence" value="ECO:0007669"/>
    <property type="project" value="TreeGrafter"/>
</dbReference>
<dbReference type="GO" id="GO:0005524">
    <property type="term" value="F:ATP binding"/>
    <property type="evidence" value="ECO:0007669"/>
    <property type="project" value="UniProtKB-UniRule"/>
</dbReference>
<dbReference type="GO" id="GO:0036430">
    <property type="term" value="F:CMP kinase activity"/>
    <property type="evidence" value="ECO:0007669"/>
    <property type="project" value="RHEA"/>
</dbReference>
<dbReference type="GO" id="GO:0036431">
    <property type="term" value="F:dCMP kinase activity"/>
    <property type="evidence" value="ECO:0007669"/>
    <property type="project" value="RHEA"/>
</dbReference>
<dbReference type="GO" id="GO:0004592">
    <property type="term" value="F:pantoate-beta-alanine ligase activity"/>
    <property type="evidence" value="ECO:0007669"/>
    <property type="project" value="UniProtKB-UniRule"/>
</dbReference>
<dbReference type="GO" id="GO:0015949">
    <property type="term" value="P:nucleobase-containing small molecule interconversion"/>
    <property type="evidence" value="ECO:0007669"/>
    <property type="project" value="TreeGrafter"/>
</dbReference>
<dbReference type="GO" id="GO:0015940">
    <property type="term" value="P:pantothenate biosynthetic process"/>
    <property type="evidence" value="ECO:0007669"/>
    <property type="project" value="UniProtKB-UniRule"/>
</dbReference>
<dbReference type="GO" id="GO:0006220">
    <property type="term" value="P:pyrimidine nucleotide metabolic process"/>
    <property type="evidence" value="ECO:0007669"/>
    <property type="project" value="UniProtKB-UniRule"/>
</dbReference>
<dbReference type="CDD" id="cd02020">
    <property type="entry name" value="CMPK"/>
    <property type="match status" value="1"/>
</dbReference>
<dbReference type="Gene3D" id="3.40.50.620">
    <property type="entry name" value="HUPs"/>
    <property type="match status" value="1"/>
</dbReference>
<dbReference type="Gene3D" id="3.40.50.300">
    <property type="entry name" value="P-loop containing nucleotide triphosphate hydrolases"/>
    <property type="match status" value="1"/>
</dbReference>
<dbReference type="Gene3D" id="3.30.1300.10">
    <property type="entry name" value="Pantoate-beta-alanine ligase, C-terminal domain"/>
    <property type="match status" value="1"/>
</dbReference>
<dbReference type="HAMAP" id="MF_00238">
    <property type="entry name" value="Cytidyl_kinase_type1"/>
    <property type="match status" value="1"/>
</dbReference>
<dbReference type="HAMAP" id="MF_00158">
    <property type="entry name" value="PanC"/>
    <property type="match status" value="1"/>
</dbReference>
<dbReference type="HAMAP" id="MF_01349">
    <property type="entry name" value="PanCY"/>
    <property type="match status" value="1"/>
</dbReference>
<dbReference type="InterPro" id="IPR004821">
    <property type="entry name" value="Cyt_trans-like"/>
</dbReference>
<dbReference type="InterPro" id="IPR003136">
    <property type="entry name" value="Cytidylate_kin"/>
</dbReference>
<dbReference type="InterPro" id="IPR011994">
    <property type="entry name" value="Cytidylate_kinase_dom"/>
</dbReference>
<dbReference type="InterPro" id="IPR027417">
    <property type="entry name" value="P-loop_NTPase"/>
</dbReference>
<dbReference type="InterPro" id="IPR003721">
    <property type="entry name" value="Pantoate_ligase"/>
</dbReference>
<dbReference type="InterPro" id="IPR024894">
    <property type="entry name" value="Pantoate_ligase/cytidylate_kin"/>
</dbReference>
<dbReference type="InterPro" id="IPR042176">
    <property type="entry name" value="Pantoate_ligase_C"/>
</dbReference>
<dbReference type="InterPro" id="IPR014729">
    <property type="entry name" value="Rossmann-like_a/b/a_fold"/>
</dbReference>
<dbReference type="NCBIfam" id="TIGR00017">
    <property type="entry name" value="cmk"/>
    <property type="match status" value="1"/>
</dbReference>
<dbReference type="NCBIfam" id="TIGR00125">
    <property type="entry name" value="cyt_tran_rel"/>
    <property type="match status" value="1"/>
</dbReference>
<dbReference type="NCBIfam" id="TIGR00018">
    <property type="entry name" value="panC"/>
    <property type="match status" value="1"/>
</dbReference>
<dbReference type="NCBIfam" id="NF010004">
    <property type="entry name" value="PRK13477.1"/>
    <property type="match status" value="1"/>
</dbReference>
<dbReference type="PANTHER" id="PTHR21299:SF2">
    <property type="entry name" value="CYTIDYLATE KINASE"/>
    <property type="match status" value="1"/>
</dbReference>
<dbReference type="PANTHER" id="PTHR21299">
    <property type="entry name" value="CYTIDYLATE KINASE/PANTOATE-BETA-ALANINE LIGASE"/>
    <property type="match status" value="1"/>
</dbReference>
<dbReference type="Pfam" id="PF02224">
    <property type="entry name" value="Cytidylate_kin"/>
    <property type="match status" value="1"/>
</dbReference>
<dbReference type="Pfam" id="PF02569">
    <property type="entry name" value="Pantoate_ligase"/>
    <property type="match status" value="1"/>
</dbReference>
<dbReference type="SUPFAM" id="SSF52374">
    <property type="entry name" value="Nucleotidylyl transferase"/>
    <property type="match status" value="1"/>
</dbReference>
<dbReference type="SUPFAM" id="SSF52540">
    <property type="entry name" value="P-loop containing nucleoside triphosphate hydrolases"/>
    <property type="match status" value="1"/>
</dbReference>
<accession>Q7U4P0</accession>
<reference key="1">
    <citation type="journal article" date="2003" name="Nature">
        <title>The genome of a motile marine Synechococcus.</title>
        <authorList>
            <person name="Palenik B."/>
            <person name="Brahamsha B."/>
            <person name="Larimer F.W."/>
            <person name="Land M.L."/>
            <person name="Hauser L."/>
            <person name="Chain P."/>
            <person name="Lamerdin J.E."/>
            <person name="Regala W."/>
            <person name="Allen E.E."/>
            <person name="McCarren J."/>
            <person name="Paulsen I.T."/>
            <person name="Dufresne A."/>
            <person name="Partensky F."/>
            <person name="Webb E.A."/>
            <person name="Waterbury J."/>
        </authorList>
    </citation>
    <scope>NUCLEOTIDE SEQUENCE [LARGE SCALE GENOMIC DNA]</scope>
    <source>
        <strain>WH8102</strain>
    </source>
</reference>